<evidence type="ECO:0000255" key="1">
    <source>
        <dbReference type="PROSITE-ProRule" id="PRU00659"/>
    </source>
</evidence>
<evidence type="ECO:0000256" key="2">
    <source>
        <dbReference type="SAM" id="MobiDB-lite"/>
    </source>
</evidence>
<evidence type="ECO:0000269" key="3">
    <source>
    </source>
</evidence>
<evidence type="ECO:0000269" key="4">
    <source>
    </source>
</evidence>
<evidence type="ECO:0000269" key="5">
    <source>
    </source>
</evidence>
<evidence type="ECO:0000269" key="6">
    <source>
    </source>
</evidence>
<evidence type="ECO:0000269" key="7">
    <source>
    </source>
</evidence>
<evidence type="ECO:0000269" key="8">
    <source>
    </source>
</evidence>
<evidence type="ECO:0000269" key="9">
    <source>
    </source>
</evidence>
<evidence type="ECO:0000269" key="10">
    <source>
    </source>
</evidence>
<evidence type="ECO:0000269" key="11">
    <source>
    </source>
</evidence>
<evidence type="ECO:0000269" key="12">
    <source>
    </source>
</evidence>
<evidence type="ECO:0000269" key="13">
    <source>
    </source>
</evidence>
<evidence type="ECO:0000269" key="14">
    <source>
    </source>
</evidence>
<evidence type="ECO:0000269" key="15">
    <source>
    </source>
</evidence>
<evidence type="ECO:0000269" key="16">
    <source>
    </source>
</evidence>
<evidence type="ECO:0000269" key="17">
    <source>
    </source>
</evidence>
<evidence type="ECO:0000269" key="18">
    <source>
    </source>
</evidence>
<evidence type="ECO:0000269" key="19">
    <source>
    </source>
</evidence>
<evidence type="ECO:0000269" key="20">
    <source>
    </source>
</evidence>
<evidence type="ECO:0000269" key="21">
    <source>
    </source>
</evidence>
<evidence type="ECO:0000269" key="22">
    <source>
    </source>
</evidence>
<evidence type="ECO:0000269" key="23">
    <source>
    </source>
</evidence>
<evidence type="ECO:0000269" key="24">
    <source>
    </source>
</evidence>
<evidence type="ECO:0000305" key="25"/>
<evidence type="ECO:0000305" key="26">
    <source>
    </source>
</evidence>
<evidence type="ECO:0007829" key="27">
    <source>
        <dbReference type="PDB" id="3BH7"/>
    </source>
</evidence>
<sequence length="350" mass="39641">MGCFFSKRRKADKESRPENEEERPKQYSWDQREKVDPKDYMFSGLKDETVGRLPGTVAGQQFLIQDCENCNIYIFDHSATVTIDDCTNCIIFLGPVKGSVFFRNCRDCKCTLACQQFRVRDCRKLEVFLCCATQPIIESSSNIKFGCFQWYYPELAFQFKDAGLSIFNNTWSNIHDFTPVSGELNWSLLPEDAVVQDYVPIPTTEELKAVRVSTEANRSIVPISRGQRQKSSDESCLVVLFAGDYTIANARKLIDEMVGKGFFLVQTKEVSMKAEDAQRVFREKAPDFLPLLNKGPVIALEFNGDGAVEVCQLIVNEIFNGTKMFVSESKETASGDVDSFYNFADIQMGI</sequence>
<proteinExistence type="evidence at protein level"/>
<organism>
    <name type="scientific">Homo sapiens</name>
    <name type="common">Human</name>
    <dbReference type="NCBI Taxonomy" id="9606"/>
    <lineage>
        <taxon>Eukaryota</taxon>
        <taxon>Metazoa</taxon>
        <taxon>Chordata</taxon>
        <taxon>Craniata</taxon>
        <taxon>Vertebrata</taxon>
        <taxon>Euteleostomi</taxon>
        <taxon>Mammalia</taxon>
        <taxon>Eutheria</taxon>
        <taxon>Euarchontoglires</taxon>
        <taxon>Primates</taxon>
        <taxon>Haplorrhini</taxon>
        <taxon>Catarrhini</taxon>
        <taxon>Hominidae</taxon>
        <taxon>Homo</taxon>
    </lineage>
</organism>
<comment type="function">
    <text evidence="11 17 19 20">Acts as a GTPase-activating protein (GAP) involved in trafficking between the Golgi and the ciliary membrane. Involved in localization of proteins, such as NPHP3, to the cilium membrane by inducing hydrolysis of GTP ARL3, leading to the release of UNC119 (or UNC119B). Acts as a GTPase-activating protein (GAP) for tubulin in concert with tubulin-specific chaperone C, but does not enhance tubulin heterodimerization. Acts as a guanine nucleotide dissociation inhibitor towards ADP-ribosylation factor-like proteins.</text>
</comment>
<comment type="subunit">
    <text evidence="11 16 17 18">Found in a complex with ARL3, RP2 and UNC119 (or UNC119B); RP2 induces hydrolysis of GTP ARL3 in the complex, leading to the release of UNC119 (or UNC119B). Interacts with ARL3; interaction is direct and stimulated with the activated GTP-bound form of ARL3.</text>
</comment>
<comment type="interaction">
    <interactant intactId="EBI-7996807">
        <id>O75695</id>
    </interactant>
    <interactant intactId="EBI-11339910">
        <id>Q8IYS1</id>
        <label>PM20D2</label>
    </interactant>
    <organismsDiffer>false</organismsDiffer>
    <experiments>3</experiments>
</comment>
<comment type="interaction">
    <interactant intactId="EBI-7996807">
        <id>O75695</id>
    </interactant>
    <interactant intactId="EBI-6860857">
        <id>Q9WUL7</id>
        <label>Arl3</label>
    </interactant>
    <organismsDiffer>true</organismsDiffer>
    <experiments>5</experiments>
</comment>
<comment type="subcellular location">
    <subcellularLocation>
        <location evidence="9 13">Cell membrane</location>
        <topology evidence="9">Lipid-anchor</topology>
        <orientation evidence="9">Cytoplasmic side</orientation>
    </subcellularLocation>
    <subcellularLocation>
        <location evidence="19">Cell projection</location>
        <location evidence="19">Cilium</location>
    </subcellularLocation>
    <text evidence="13">Detected predominantly at the plasma membrane of rod and cone photoreceptors. Not detected in the nucleus.</text>
</comment>
<comment type="tissue specificity">
    <text evidence="9 13 17">Ubiquitous. Expressed in the rod and cone photoreceptors, extending from the tips of the outer segment (OS) through the inner segment (IS) and outer nuclear layer (ONL) and into the synaptic terminals of the outer plexiform layer (ONL). Also detected in the bipolar, horizontal and amacrine cells in the inner nuclear layer (INL), extending to the inner plexiform layer (IPL) and though the ganglion cell layer (GCL) and into the nerve fiber layer (NFL) (at protein level).</text>
</comment>
<comment type="PTM">
    <text evidence="26">Myristoylated on Gly-2; which may be required for membrane targeting.</text>
</comment>
<comment type="PTM">
    <text evidence="9 25">Palmitoylated on Cys-3; which may be required for plasma membrane targeting (Probable). Mutation of Cys-3 targets the protein to internal membranes.</text>
</comment>
<comment type="disease" evidence="3 4 5 6 8 9 10 11 12 14 15 16 21 24">
    <disease id="DI-00972">
        <name>Retinitis pigmentosa 2</name>
        <acronym>RP2</acronym>
        <description>A retinal dystrophy belonging to the group of pigmentary retinopathies. Retinitis pigmentosa is characterized by retinal pigment deposits visible on fundus examination and primary loss of rod photoreceptor cells followed by secondary loss of cone photoreceptors. Patients typically have night vision blindness and loss of midperipheral visual field. As their condition progresses, they lose their far peripheral visual field and eventually central vision as well.</description>
        <dbReference type="MIM" id="312600"/>
    </disease>
    <text>The disease is caused by variants affecting the gene represented in this entry.</text>
</comment>
<comment type="similarity">
    <text evidence="25">Belongs to the TBCC family.</text>
</comment>
<protein>
    <recommendedName>
        <fullName>Protein XRP2</fullName>
    </recommendedName>
</protein>
<gene>
    <name type="primary">RP2</name>
</gene>
<accession>O75695</accession>
<accession>Q86XJ7</accession>
<accession>Q9NU67</accession>
<reference key="1">
    <citation type="journal article" date="1998" name="Nat. Genet.">
        <title>Positional cloning of the gene for X-linked retinitis pigmentosa 2.</title>
        <authorList>
            <person name="Schwahn U."/>
            <person name="Lenzner S."/>
            <person name="Dong J."/>
            <person name="Feil S."/>
            <person name="Hinzmann B."/>
            <person name="van Duijnhoven G."/>
            <person name="Kirschner R."/>
            <person name="Hemberger M."/>
            <person name="Bergen A.A.B."/>
            <person name="Rosenberg T."/>
            <person name="Pinckers A.J.L.G."/>
            <person name="Fundele R."/>
            <person name="Rosenthal A."/>
            <person name="Cremers F.P.M."/>
            <person name="Ropers H.-H."/>
            <person name="Berger W."/>
        </authorList>
    </citation>
    <scope>NUCLEOTIDE SEQUENCE [MRNA]</scope>
    <scope>VARIANTS RP2 SER-6 DEL AND HIS-118</scope>
    <source>
        <tissue>Brain</tissue>
    </source>
</reference>
<reference key="2">
    <citation type="journal article" date="2005" name="Nature">
        <title>The DNA sequence of the human X chromosome.</title>
        <authorList>
            <person name="Ross M.T."/>
            <person name="Grafham D.V."/>
            <person name="Coffey A.J."/>
            <person name="Scherer S."/>
            <person name="McLay K."/>
            <person name="Muzny D."/>
            <person name="Platzer M."/>
            <person name="Howell G.R."/>
            <person name="Burrows C."/>
            <person name="Bird C.P."/>
            <person name="Frankish A."/>
            <person name="Lovell F.L."/>
            <person name="Howe K.L."/>
            <person name="Ashurst J.L."/>
            <person name="Fulton R.S."/>
            <person name="Sudbrak R."/>
            <person name="Wen G."/>
            <person name="Jones M.C."/>
            <person name="Hurles M.E."/>
            <person name="Andrews T.D."/>
            <person name="Scott C.E."/>
            <person name="Searle S."/>
            <person name="Ramser J."/>
            <person name="Whittaker A."/>
            <person name="Deadman R."/>
            <person name="Carter N.P."/>
            <person name="Hunt S.E."/>
            <person name="Chen R."/>
            <person name="Cree A."/>
            <person name="Gunaratne P."/>
            <person name="Havlak P."/>
            <person name="Hodgson A."/>
            <person name="Metzker M.L."/>
            <person name="Richards S."/>
            <person name="Scott G."/>
            <person name="Steffen D."/>
            <person name="Sodergren E."/>
            <person name="Wheeler D.A."/>
            <person name="Worley K.C."/>
            <person name="Ainscough R."/>
            <person name="Ambrose K.D."/>
            <person name="Ansari-Lari M.A."/>
            <person name="Aradhya S."/>
            <person name="Ashwell R.I."/>
            <person name="Babbage A.K."/>
            <person name="Bagguley C.L."/>
            <person name="Ballabio A."/>
            <person name="Banerjee R."/>
            <person name="Barker G.E."/>
            <person name="Barlow K.F."/>
            <person name="Barrett I.P."/>
            <person name="Bates K.N."/>
            <person name="Beare D.M."/>
            <person name="Beasley H."/>
            <person name="Beasley O."/>
            <person name="Beck A."/>
            <person name="Bethel G."/>
            <person name="Blechschmidt K."/>
            <person name="Brady N."/>
            <person name="Bray-Allen S."/>
            <person name="Bridgeman A.M."/>
            <person name="Brown A.J."/>
            <person name="Brown M.J."/>
            <person name="Bonnin D."/>
            <person name="Bruford E.A."/>
            <person name="Buhay C."/>
            <person name="Burch P."/>
            <person name="Burford D."/>
            <person name="Burgess J."/>
            <person name="Burrill W."/>
            <person name="Burton J."/>
            <person name="Bye J.M."/>
            <person name="Carder C."/>
            <person name="Carrel L."/>
            <person name="Chako J."/>
            <person name="Chapman J.C."/>
            <person name="Chavez D."/>
            <person name="Chen E."/>
            <person name="Chen G."/>
            <person name="Chen Y."/>
            <person name="Chen Z."/>
            <person name="Chinault C."/>
            <person name="Ciccodicola A."/>
            <person name="Clark S.Y."/>
            <person name="Clarke G."/>
            <person name="Clee C.M."/>
            <person name="Clegg S."/>
            <person name="Clerc-Blankenburg K."/>
            <person name="Clifford K."/>
            <person name="Cobley V."/>
            <person name="Cole C.G."/>
            <person name="Conquer J.S."/>
            <person name="Corby N."/>
            <person name="Connor R.E."/>
            <person name="David R."/>
            <person name="Davies J."/>
            <person name="Davis C."/>
            <person name="Davis J."/>
            <person name="Delgado O."/>
            <person name="Deshazo D."/>
            <person name="Dhami P."/>
            <person name="Ding Y."/>
            <person name="Dinh H."/>
            <person name="Dodsworth S."/>
            <person name="Draper H."/>
            <person name="Dugan-Rocha S."/>
            <person name="Dunham A."/>
            <person name="Dunn M."/>
            <person name="Durbin K.J."/>
            <person name="Dutta I."/>
            <person name="Eades T."/>
            <person name="Ellwood M."/>
            <person name="Emery-Cohen A."/>
            <person name="Errington H."/>
            <person name="Evans K.L."/>
            <person name="Faulkner L."/>
            <person name="Francis F."/>
            <person name="Frankland J."/>
            <person name="Fraser A.E."/>
            <person name="Galgoczy P."/>
            <person name="Gilbert J."/>
            <person name="Gill R."/>
            <person name="Gloeckner G."/>
            <person name="Gregory S.G."/>
            <person name="Gribble S."/>
            <person name="Griffiths C."/>
            <person name="Grocock R."/>
            <person name="Gu Y."/>
            <person name="Gwilliam R."/>
            <person name="Hamilton C."/>
            <person name="Hart E.A."/>
            <person name="Hawes A."/>
            <person name="Heath P.D."/>
            <person name="Heitmann K."/>
            <person name="Hennig S."/>
            <person name="Hernandez J."/>
            <person name="Hinzmann B."/>
            <person name="Ho S."/>
            <person name="Hoffs M."/>
            <person name="Howden P.J."/>
            <person name="Huckle E.J."/>
            <person name="Hume J."/>
            <person name="Hunt P.J."/>
            <person name="Hunt A.R."/>
            <person name="Isherwood J."/>
            <person name="Jacob L."/>
            <person name="Johnson D."/>
            <person name="Jones S."/>
            <person name="de Jong P.J."/>
            <person name="Joseph S.S."/>
            <person name="Keenan S."/>
            <person name="Kelly S."/>
            <person name="Kershaw J.K."/>
            <person name="Khan Z."/>
            <person name="Kioschis P."/>
            <person name="Klages S."/>
            <person name="Knights A.J."/>
            <person name="Kosiura A."/>
            <person name="Kovar-Smith C."/>
            <person name="Laird G.K."/>
            <person name="Langford C."/>
            <person name="Lawlor S."/>
            <person name="Leversha M."/>
            <person name="Lewis L."/>
            <person name="Liu W."/>
            <person name="Lloyd C."/>
            <person name="Lloyd D.M."/>
            <person name="Loulseged H."/>
            <person name="Loveland J.E."/>
            <person name="Lovell J.D."/>
            <person name="Lozado R."/>
            <person name="Lu J."/>
            <person name="Lyne R."/>
            <person name="Ma J."/>
            <person name="Maheshwari M."/>
            <person name="Matthews L.H."/>
            <person name="McDowall J."/>
            <person name="McLaren S."/>
            <person name="McMurray A."/>
            <person name="Meidl P."/>
            <person name="Meitinger T."/>
            <person name="Milne S."/>
            <person name="Miner G."/>
            <person name="Mistry S.L."/>
            <person name="Morgan M."/>
            <person name="Morris S."/>
            <person name="Mueller I."/>
            <person name="Mullikin J.C."/>
            <person name="Nguyen N."/>
            <person name="Nordsiek G."/>
            <person name="Nyakatura G."/>
            <person name="O'dell C.N."/>
            <person name="Okwuonu G."/>
            <person name="Palmer S."/>
            <person name="Pandian R."/>
            <person name="Parker D."/>
            <person name="Parrish J."/>
            <person name="Pasternak S."/>
            <person name="Patel D."/>
            <person name="Pearce A.V."/>
            <person name="Pearson D.M."/>
            <person name="Pelan S.E."/>
            <person name="Perez L."/>
            <person name="Porter K.M."/>
            <person name="Ramsey Y."/>
            <person name="Reichwald K."/>
            <person name="Rhodes S."/>
            <person name="Ridler K.A."/>
            <person name="Schlessinger D."/>
            <person name="Schueler M.G."/>
            <person name="Sehra H.K."/>
            <person name="Shaw-Smith C."/>
            <person name="Shen H."/>
            <person name="Sheridan E.M."/>
            <person name="Shownkeen R."/>
            <person name="Skuce C.D."/>
            <person name="Smith M.L."/>
            <person name="Sotheran E.C."/>
            <person name="Steingruber H.E."/>
            <person name="Steward C.A."/>
            <person name="Storey R."/>
            <person name="Swann R.M."/>
            <person name="Swarbreck D."/>
            <person name="Tabor P.E."/>
            <person name="Taudien S."/>
            <person name="Taylor T."/>
            <person name="Teague B."/>
            <person name="Thomas K."/>
            <person name="Thorpe A."/>
            <person name="Timms K."/>
            <person name="Tracey A."/>
            <person name="Trevanion S."/>
            <person name="Tromans A.C."/>
            <person name="d'Urso M."/>
            <person name="Verduzco D."/>
            <person name="Villasana D."/>
            <person name="Waldron L."/>
            <person name="Wall M."/>
            <person name="Wang Q."/>
            <person name="Warren J."/>
            <person name="Warry G.L."/>
            <person name="Wei X."/>
            <person name="West A."/>
            <person name="Whitehead S.L."/>
            <person name="Whiteley M.N."/>
            <person name="Wilkinson J.E."/>
            <person name="Willey D.L."/>
            <person name="Williams G."/>
            <person name="Williams L."/>
            <person name="Williamson A."/>
            <person name="Williamson H."/>
            <person name="Wilming L."/>
            <person name="Woodmansey R.L."/>
            <person name="Wray P.W."/>
            <person name="Yen J."/>
            <person name="Zhang J."/>
            <person name="Zhou J."/>
            <person name="Zoghbi H."/>
            <person name="Zorilla S."/>
            <person name="Buck D."/>
            <person name="Reinhardt R."/>
            <person name="Poustka A."/>
            <person name="Rosenthal A."/>
            <person name="Lehrach H."/>
            <person name="Meindl A."/>
            <person name="Minx P.J."/>
            <person name="Hillier L.W."/>
            <person name="Willard H.F."/>
            <person name="Wilson R.K."/>
            <person name="Waterston R.H."/>
            <person name="Rice C.M."/>
            <person name="Vaudin M."/>
            <person name="Coulson A."/>
            <person name="Nelson D.L."/>
            <person name="Weinstock G."/>
            <person name="Sulston J.E."/>
            <person name="Durbin R.M."/>
            <person name="Hubbard T."/>
            <person name="Gibbs R.A."/>
            <person name="Beck S."/>
            <person name="Rogers J."/>
            <person name="Bentley D.R."/>
        </authorList>
    </citation>
    <scope>NUCLEOTIDE SEQUENCE [LARGE SCALE GENOMIC DNA]</scope>
</reference>
<reference key="3">
    <citation type="journal article" date="2004" name="Genome Res.">
        <title>The status, quality, and expansion of the NIH full-length cDNA project: the Mammalian Gene Collection (MGC).</title>
        <authorList>
            <consortium name="The MGC Project Team"/>
        </authorList>
    </citation>
    <scope>NUCLEOTIDE SEQUENCE [LARGE SCALE MRNA]</scope>
    <source>
        <tissue>Eye</tissue>
        <tissue>Uterus</tissue>
    </source>
</reference>
<reference key="4">
    <citation type="journal article" date="2011" name="BMC Syst. Biol.">
        <title>Initial characterization of the human central proteome.</title>
        <authorList>
            <person name="Burkard T.R."/>
            <person name="Planyavsky M."/>
            <person name="Kaupe I."/>
            <person name="Breitwieser F.P."/>
            <person name="Buerckstuemmer T."/>
            <person name="Bennett K.L."/>
            <person name="Superti-Furga G."/>
            <person name="Colinge J."/>
        </authorList>
    </citation>
    <scope>IDENTIFICATION BY MASS SPECTROMETRY [LARGE SCALE ANALYSIS]</scope>
</reference>
<reference key="5">
    <citation type="journal article" date="2013" name="J. Proteome Res.">
        <title>Toward a comprehensive characterization of a human cancer cell phosphoproteome.</title>
        <authorList>
            <person name="Zhou H."/>
            <person name="Di Palma S."/>
            <person name="Preisinger C."/>
            <person name="Peng M."/>
            <person name="Polat A.N."/>
            <person name="Heck A.J."/>
            <person name="Mohammed S."/>
        </authorList>
    </citation>
    <scope>IDENTIFICATION BY MASS SPECTROMETRY [LARGE SCALE ANALYSIS]</scope>
    <source>
        <tissue>Cervix carcinoma</tissue>
    </source>
</reference>
<reference key="6">
    <citation type="journal article" date="2014" name="Nat. Commun.">
        <title>Global profiling of co- and post-translationally N-myristoylated proteomes in human cells.</title>
        <authorList>
            <person name="Thinon E."/>
            <person name="Serwa R.A."/>
            <person name="Broncel M."/>
            <person name="Brannigan J.A."/>
            <person name="Brassat U."/>
            <person name="Wright M.H."/>
            <person name="Heal W.P."/>
            <person name="Wilkinson A.J."/>
            <person name="Mann D.J."/>
            <person name="Tate E.W."/>
        </authorList>
    </citation>
    <scope>MYRISTOYLATION AT GLY-2</scope>
    <scope>CLEAVAGE OF INITIATOR METHIONINE</scope>
    <scope>IDENTIFICATION BY MASS SPECTROMETRY</scope>
</reference>
<reference key="7">
    <citation type="journal article" date="2015" name="Proteomics">
        <title>N-terminome analysis of the human mitochondrial proteome.</title>
        <authorList>
            <person name="Vaca Jacome A.S."/>
            <person name="Rabilloud T."/>
            <person name="Schaeffer-Reiss C."/>
            <person name="Rompais M."/>
            <person name="Ayoub D."/>
            <person name="Lane L."/>
            <person name="Bairoch A."/>
            <person name="Van Dorsselaer A."/>
            <person name="Carapito C."/>
        </authorList>
    </citation>
    <scope>IDENTIFICATION BY MASS SPECTROMETRY [LARGE SCALE ANALYSIS]</scope>
</reference>
<reference key="8">
    <citation type="journal article" date="2000" name="Hum. Mol. Genet.">
        <title>Mutations in the N-terminus of the X-linked retinitis pigmentosa protein RP2 interfere with the normal targeting of the protein to the plasma membrane.</title>
        <authorList>
            <person name="Chapple J.P."/>
            <person name="Hardcastle A.J."/>
            <person name="Grayson C."/>
            <person name="Spackman L.A."/>
            <person name="Willison K.R."/>
            <person name="Cheetham M.E."/>
        </authorList>
    </citation>
    <scope>CHARACTERIZATION OF VARIANTS RP2 SER-6 DEL AND HIS-118</scope>
    <scope>MYRISTOYLATION AT GLY-2</scope>
    <scope>PALMITOYLATION AT CYS-3</scope>
    <scope>MUTAGENESIS OF GLY-2 AND CYS-3</scope>
    <scope>TISSUE SPECIFICITY</scope>
    <scope>SUBCELLULAR LOCATION</scope>
</reference>
<reference key="9">
    <citation type="journal article" date="2002" name="J. Biol. Chem.">
        <title>Functional overlap between retinitis pigmentosa 2 protein and the tubulin-specific chaperone cofactor C.</title>
        <authorList>
            <person name="Bartolini F."/>
            <person name="Bhamidipati A."/>
            <person name="Thomas S."/>
            <person name="Schwahn U."/>
            <person name="Lewis S.A."/>
            <person name="Cowan N.J."/>
        </authorList>
    </citation>
    <scope>FUNCTION</scope>
    <scope>CHARACTERIZATION OF VARIANTS RP2 SER-6 DEL AND HIS-118</scope>
    <scope>INTERACTION WITH ARL3</scope>
</reference>
<reference key="10">
    <citation type="journal article" date="2002" name="Hum. Mol. Genet.">
        <title>Localization in the human retina of the X-linked retinitis pigmentosa protein RP2, its homologue cofactor C and the RP2 interacting protein Arl3.</title>
        <authorList>
            <person name="Grayson C."/>
            <person name="Bartolini F."/>
            <person name="Chapple J.P."/>
            <person name="Willison K.R."/>
            <person name="Bhamidipati A."/>
            <person name="Lewis S.A."/>
            <person name="Luthert P.J."/>
            <person name="Hardcastle A.J."/>
            <person name="Cowan N.J."/>
            <person name="Cheetham M.E."/>
        </authorList>
    </citation>
    <scope>SUBCELLULAR LOCATION</scope>
    <scope>TISSUE SPECIFICITY</scope>
</reference>
<reference key="11">
    <citation type="journal article" date="2008" name="FEBS Lett.">
        <title>Specificity of Arl2/Arl3 signaling is mediated by a ternary Arl3-effector-GAP complex.</title>
        <authorList>
            <person name="Veltel S."/>
            <person name="Kravchenko A."/>
            <person name="Ismail S."/>
            <person name="Wittinghofer A."/>
        </authorList>
    </citation>
    <scope>IDENTIFICATION IN A COMPLEX WITH ARL3 AND UNC119</scope>
</reference>
<reference key="12">
    <citation type="journal article" date="2010" name="Hum. Mol. Genet.">
        <title>The retinitis pigmentosa protein RP2 links pericentriolar vesicle transport between the Golgi and the primary cilium.</title>
        <authorList>
            <person name="Evans R.J."/>
            <person name="Schwarz N."/>
            <person name="Nagel-Wolfrum K."/>
            <person name="Wolfrum U."/>
            <person name="Hardcastle A.J."/>
            <person name="Cheetham M.E."/>
        </authorList>
    </citation>
    <scope>FUNCTION</scope>
    <scope>SUBCELLULAR LOCATION</scope>
</reference>
<reference key="13">
    <citation type="journal article" date="2011" name="Genes Dev.">
        <title>An ARL3-UNC119-RP2 GTPase cycle targets myristoylated NPHP3 to the primary cilium.</title>
        <authorList>
            <person name="Wright K.J."/>
            <person name="Baye L.M."/>
            <person name="Olivier-Mason A."/>
            <person name="Mukhopadhyay S."/>
            <person name="Sang L."/>
            <person name="Kwong M."/>
            <person name="Wang W."/>
            <person name="Pretorius P.R."/>
            <person name="Sheffield V.C."/>
            <person name="Sengupta P."/>
            <person name="Slusarski D.C."/>
            <person name="Jackson P.K."/>
        </authorList>
    </citation>
    <scope>FUNCTION</scope>
</reference>
<reference key="14">
    <citation type="journal article" date="2006" name="Structure">
        <title>Crystal structure of the human retinitis pigmentosa 2 protein and its interaction with Arl3.</title>
        <authorList>
            <person name="Kuehnel K."/>
            <person name="Veltel S."/>
            <person name="Schlichting I."/>
            <person name="Wittinghofer A."/>
        </authorList>
    </citation>
    <scope>X-RAY CRYSTALLOGRAPHY (2.1 ANGSTROMS)</scope>
    <scope>INTERACTION WITH ARL3</scope>
    <scope>CHARACTERIZATION OF VARIANTS RP2 HIS-118 AND GLY-138</scope>
    <scope>CHARACTERIZATION OF VARIANT TRP-282</scope>
</reference>
<reference key="15">
    <citation type="journal article" date="2008" name="Nat. Struct. Mol. Biol.">
        <title>The retinitis pigmentosa 2 gene product is a GTPase-activating protein for Arf-like 3.</title>
        <authorList>
            <person name="Veltel S."/>
            <person name="Gasper R."/>
            <person name="Eisenacher E."/>
            <person name="Wittinghofer A."/>
        </authorList>
    </citation>
    <scope>X-RAY CRYSTALLOGRAPHY (1.90 ANGSTROMS) OF 1-350 OF COMPLEX WITH MOUSE ARL3 AND GTP</scope>
    <scope>FUNCTION</scope>
    <scope>INTERACTION WITH ARL3</scope>
    <scope>TISSUE SPECIFICITY</scope>
    <scope>CHARACTERIZATION OF VARIANTS LEU-118 AND GLY-138</scope>
    <scope>MUTAGENESIS OF SER-28; TRP-29; GLN-31; ARG-32; PHE-101; GLN-115; GLN-116; ARG-118; ARG-120 AND PHE-177</scope>
</reference>
<reference key="16">
    <citation type="journal article" date="1999" name="Am. J. Hum. Genet.">
        <title>Protein-truncation mutations in the RP2 gene in a North American cohort of families with X-linked retinitis pigmentosa.</title>
        <authorList>
            <person name="Mears A.J."/>
            <person name="Gieser L."/>
            <person name="Yan D."/>
            <person name="Chen C."/>
            <person name="Fahrner S."/>
            <person name="Hiriyanna S."/>
            <person name="Fujita R."/>
            <person name="Jacobson S.G."/>
            <person name="Sieving P.A."/>
            <person name="Swaroop A."/>
        </authorList>
    </citation>
    <scope>VARIANT RP2 GLY-108</scope>
</reference>
<reference key="17">
    <citation type="journal article" date="1999" name="Am. J. Hum. Genet.">
        <title>Mutations in the RP2 gene cause disease in 10% of families with familial X-Linked retinitis pigmentosa assessed in this study.</title>
        <authorList>
            <person name="Hardcastle A.J."/>
            <person name="Thiselton D.L."/>
            <person name="Van Maldergem L."/>
            <person name="Saha B.K."/>
            <person name="Jay M."/>
            <person name="Plant C."/>
            <person name="Taylor R."/>
            <person name="Bird A.C."/>
            <person name="Bhattacharya S."/>
        </authorList>
    </citation>
    <scope>VARIANT RP2 HIS-118</scope>
</reference>
<reference key="18">
    <citation type="journal article" date="1999" name="Ophthalmic Genet.">
        <title>Genotype-phenotype correlation in X-linked retinitis pigmentosa 2 (RP2).</title>
        <authorList>
            <person name="Rosenberg T."/>
            <person name="Schwahn U."/>
            <person name="Feil S."/>
            <person name="Berger W."/>
        </authorList>
    </citation>
    <scope>VARIANTS RP2 SER-6 DEL AND HIS-118</scope>
</reference>
<reference key="19">
    <citation type="journal article" date="2000" name="Hum. Mutat.">
        <title>Novel frameshift mutations in the RP2 gene and polymorphic variants.</title>
        <authorList>
            <person name="Thiselton D.L."/>
            <person name="Zito I."/>
            <person name="Plant C."/>
            <person name="Jay M."/>
            <person name="Hodgson S.V."/>
            <person name="Bird A.C."/>
            <person name="Bhattacharya S.S."/>
            <person name="Hardcastle A.J."/>
        </authorList>
    </citation>
    <scope>VARIANTS TRP-282 AND TYR-338</scope>
</reference>
<reference key="20">
    <citation type="journal article" date="2000" name="Invest. Ophthalmol. Vis. Sci.">
        <title>A new Leu253Arg mutation in the RP2 gene in a Japanese family with X-linked retinitis pigmentosa.</title>
        <authorList>
            <person name="Wada Y."/>
            <person name="Nakazawa M."/>
            <person name="Abe T."/>
            <person name="Tamai M."/>
        </authorList>
    </citation>
    <scope>VARIANT RP2 ARG-253</scope>
</reference>
<reference key="21">
    <citation type="journal article" date="2000" name="Invest. Ophthalmol. Vis. Sci.">
        <title>X-linked retinitis pigmentosa: mutation spectrum of the RPGR and RP2 genes and correlation with visual function.</title>
        <authorList>
            <person name="Sharon D."/>
            <person name="Bruns G.A.P."/>
            <person name="McGee T.L."/>
            <person name="Sandberg M.A."/>
            <person name="Berson E.L."/>
            <person name="Dryja T.P."/>
        </authorList>
    </citation>
    <scope>VARIANTS RP2 TYR-86; LEU-95; HIS-118 AND ILE-137 DEL</scope>
    <scope>VARIANT TRP-282</scope>
</reference>
<reference key="22">
    <citation type="journal article" date="2001" name="Hum. Mutat.">
        <title>Identification of novel RP2 mutations in a subset of X-linked retinitis pigmentosa families and prediction of new domains.</title>
        <authorList>
            <person name="Miano M.G."/>
            <person name="Testa F."/>
            <person name="Filippini F."/>
            <person name="Trujillo M."/>
            <person name="Conte I."/>
            <person name="Lanzara C."/>
            <person name="Millan J.M."/>
            <person name="De Bernardo C."/>
            <person name="Grammatico B."/>
            <person name="Mangino M."/>
            <person name="Torrente I."/>
            <person name="Carrozzo R."/>
            <person name="Simonelli F."/>
            <person name="Rinaldi E."/>
            <person name="Ventruto V."/>
            <person name="D'Urso M."/>
            <person name="Ayuso C."/>
            <person name="Ciccodicola A."/>
        </authorList>
    </citation>
    <scope>VARIANTS RP2 LEU-118 AND GLY-138</scope>
    <scope>VARIANT TRP-282</scope>
</reference>
<reference key="23">
    <citation type="journal article" date="2002" name="Am. J. Hum. Genet.">
        <title>A comprehensive mutation analysis of RP2 and RPGR in a North American cohort of families with X-linked retinitis pigmentosa.</title>
        <authorList>
            <person name="Breuer D.K."/>
            <person name="Yashar B.M."/>
            <person name="Filippova E."/>
            <person name="Hiriyanna S."/>
            <person name="Lyons R.H."/>
            <person name="Mears A.J."/>
            <person name="Asaye B."/>
            <person name="Acar C."/>
            <person name="Vervoort R."/>
            <person name="Wright A.F."/>
            <person name="Musarella M.A."/>
            <person name="Wheeler P."/>
            <person name="MacDonald I."/>
            <person name="Iannaccone A."/>
            <person name="Birch D."/>
            <person name="Hoffman D.R."/>
            <person name="Fishman G.A."/>
            <person name="Heckenlively J.R."/>
            <person name="Jacobson S.G."/>
            <person name="Sieving P.A."/>
            <person name="Swaroop A."/>
        </authorList>
    </citation>
    <scope>VARIANTS RP2 TYR-67; HIS-118; ILE-137 DEL AND PRO-188</scope>
    <scope>VARIANT TRP-282</scope>
</reference>
<reference key="24">
    <citation type="journal article" date="2003" name="Am. J. Hum. Genet.">
        <title>RP2 and RPGR mutations and clinical correlations in patients with X-linked retinitis pigmentosa.</title>
        <authorList>
            <person name="Sharon D."/>
            <person name="Sandberg M.A."/>
            <person name="Rabe V.W."/>
            <person name="Stillberger M."/>
            <person name="Dryja T.P."/>
            <person name="Berson E.L."/>
        </authorList>
    </citation>
    <scope>VARIANTS RP2 TYR-86; LEU-95; HIS-118 AND ILE-137 DEL</scope>
    <scope>VARIANT TRP-282</scope>
</reference>
<reference key="25">
    <citation type="journal article" date="2003" name="Invest. Ophthalmol. Vis. Sci.">
        <title>X-linked retinitis pigmentosa: RPGR mutations in most families with definite X linkage and clustering of mutations in a short sequence stretch of exon ORF15.</title>
        <authorList>
            <person name="Bader I."/>
            <person name="Brandau O."/>
            <person name="Achatz H."/>
            <person name="Apfelstedt-Sylla E."/>
            <person name="Hergersberg M."/>
            <person name="Lorenz B."/>
            <person name="Wissinger B."/>
            <person name="Wittwer B."/>
            <person name="Rudolph G."/>
            <person name="Meindl A."/>
            <person name="Meitinger T."/>
        </authorList>
    </citation>
    <scope>VARIANTS RP2 HIS-118 AND CYS-118</scope>
</reference>
<reference key="26">
    <citation type="journal article" date="2012" name="Hum. Mutat.">
        <title>Next-generation genetic testing for retinitis pigmentosa.</title>
        <authorList>
            <person name="Neveling K."/>
            <person name="Collin R.W."/>
            <person name="Gilissen C."/>
            <person name="van Huet R.A."/>
            <person name="Visser L."/>
            <person name="Kwint M.P."/>
            <person name="Gijsen S.J."/>
            <person name="Zonneveld M.N."/>
            <person name="Wieskamp N."/>
            <person name="de Ligt J."/>
            <person name="Siemiatkowska A.M."/>
            <person name="Hoefsloot L.H."/>
            <person name="Buckley M.F."/>
            <person name="Kellner U."/>
            <person name="Branham K.E."/>
            <person name="den Hollander A.I."/>
            <person name="Hoischen A."/>
            <person name="Hoyng C."/>
            <person name="Klevering B.J."/>
            <person name="van den Born L.I."/>
            <person name="Veltman J.A."/>
            <person name="Cremers F.P."/>
            <person name="Scheffer H."/>
        </authorList>
    </citation>
    <scope>VARIANT RP2 TYR-108</scope>
</reference>
<reference key="27">
    <citation type="journal article" date="2016" name="Nature">
        <title>Analysis of protein-coding genetic variation in 60,706 humans.</title>
        <authorList>
            <consortium name="Exome Aggregation Consortium"/>
            <person name="Lek M."/>
            <person name="Karczewski K.J."/>
            <person name="Minikel E.V."/>
            <person name="Samocha K.E."/>
            <person name="Banks E."/>
            <person name="Fennell T."/>
            <person name="O'Donnell-Luria A.H."/>
            <person name="Ware J.S."/>
            <person name="Hill A.J."/>
            <person name="Cummings B.B."/>
            <person name="Tukiainen T."/>
            <person name="Birnbaum D.P."/>
            <person name="Kosmicki J.A."/>
            <person name="Duncan L.E."/>
            <person name="Estrada K."/>
            <person name="Zhao F."/>
            <person name="Zou J."/>
            <person name="Pierce-Hoffman E."/>
            <person name="Berghout J."/>
            <person name="Cooper D.N."/>
            <person name="Deflaux N."/>
            <person name="DePristo M."/>
            <person name="Do R."/>
            <person name="Flannick J."/>
            <person name="Fromer M."/>
            <person name="Gauthier L."/>
            <person name="Goldstein J."/>
            <person name="Gupta N."/>
            <person name="Howrigan D."/>
            <person name="Kiezun A."/>
            <person name="Kurki M.I."/>
            <person name="Moonshine A.L."/>
            <person name="Natarajan P."/>
            <person name="Orozco L."/>
            <person name="Peloso G.M."/>
            <person name="Poplin R."/>
            <person name="Rivas M.A."/>
            <person name="Ruano-Rubio V."/>
            <person name="Rose S.A."/>
            <person name="Ruderfer D.M."/>
            <person name="Shakir K."/>
            <person name="Stenson P.D."/>
            <person name="Stevens C."/>
            <person name="Thomas B.P."/>
            <person name="Tiao G."/>
            <person name="Tusie-Luna M.T."/>
            <person name="Weisburd B."/>
            <person name="Won H.H."/>
            <person name="Yu D."/>
            <person name="Altshuler D.M."/>
            <person name="Ardissino D."/>
            <person name="Boehnke M."/>
            <person name="Danesh J."/>
            <person name="Donnelly S."/>
            <person name="Elosua R."/>
            <person name="Florez J.C."/>
            <person name="Gabriel S.B."/>
            <person name="Getz G."/>
            <person name="Glatt S.J."/>
            <person name="Hultman C.M."/>
            <person name="Kathiresan S."/>
            <person name="Laakso M."/>
            <person name="McCarroll S."/>
            <person name="McCarthy M.I."/>
            <person name="McGovern D."/>
            <person name="McPherson R."/>
            <person name="Neale B.M."/>
            <person name="Palotie A."/>
            <person name="Purcell S.M."/>
            <person name="Saleheen D."/>
            <person name="Scharf J.M."/>
            <person name="Sklar P."/>
            <person name="Sullivan P.F."/>
            <person name="Tuomilehto J."/>
            <person name="Tsuang M.T."/>
            <person name="Watkins H.C."/>
            <person name="Wilson J.G."/>
            <person name="Daly M.J."/>
            <person name="MacArthur D.G."/>
        </authorList>
    </citation>
    <scope>VARIANT TRP-282</scope>
</reference>
<keyword id="KW-0002">3D-structure</keyword>
<keyword id="KW-1003">Cell membrane</keyword>
<keyword id="KW-0966">Cell projection</keyword>
<keyword id="KW-0969">Cilium</keyword>
<keyword id="KW-0225">Disease variant</keyword>
<keyword id="KW-0342">GTP-binding</keyword>
<keyword id="KW-0343">GTPase activation</keyword>
<keyword id="KW-0449">Lipoprotein</keyword>
<keyword id="KW-0472">Membrane</keyword>
<keyword id="KW-0519">Myristate</keyword>
<keyword id="KW-0547">Nucleotide-binding</keyword>
<keyword id="KW-0564">Palmitate</keyword>
<keyword id="KW-0653">Protein transport</keyword>
<keyword id="KW-1267">Proteomics identification</keyword>
<keyword id="KW-1185">Reference proteome</keyword>
<keyword id="KW-0682">Retinitis pigmentosa</keyword>
<keyword id="KW-0813">Transport</keyword>
<name>XRP2_HUMAN</name>
<dbReference type="EMBL" id="AJ007590">
    <property type="protein sequence ID" value="CAA07577.1"/>
    <property type="molecule type" value="mRNA"/>
</dbReference>
<dbReference type="EMBL" id="AL050307">
    <property type="status" value="NOT_ANNOTATED_CDS"/>
    <property type="molecule type" value="Genomic_DNA"/>
</dbReference>
<dbReference type="EMBL" id="AL627143">
    <property type="status" value="NOT_ANNOTATED_CDS"/>
    <property type="molecule type" value="Genomic_DNA"/>
</dbReference>
<dbReference type="EMBL" id="BC043348">
    <property type="protein sequence ID" value="AAH43348.1"/>
    <property type="molecule type" value="mRNA"/>
</dbReference>
<dbReference type="EMBL" id="BC053530">
    <property type="protein sequence ID" value="AAH53530.1"/>
    <property type="molecule type" value="mRNA"/>
</dbReference>
<dbReference type="CCDS" id="CCDS14270.1"/>
<dbReference type="RefSeq" id="NP_008846.2">
    <property type="nucleotide sequence ID" value="NM_006915.3"/>
</dbReference>
<dbReference type="PDB" id="2BX6">
    <property type="method" value="X-ray"/>
    <property type="resolution" value="2.10 A"/>
    <property type="chains" value="A=1-350"/>
</dbReference>
<dbReference type="PDB" id="3BH6">
    <property type="method" value="X-ray"/>
    <property type="resolution" value="2.60 A"/>
    <property type="chains" value="B=1-350"/>
</dbReference>
<dbReference type="PDB" id="3BH7">
    <property type="method" value="X-ray"/>
    <property type="resolution" value="1.90 A"/>
    <property type="chains" value="B=1-350"/>
</dbReference>
<dbReference type="PDBsum" id="2BX6"/>
<dbReference type="PDBsum" id="3BH6"/>
<dbReference type="PDBsum" id="3BH7"/>
<dbReference type="BMRB" id="O75695"/>
<dbReference type="SMR" id="O75695"/>
<dbReference type="BioGRID" id="112029">
    <property type="interactions" value="128"/>
</dbReference>
<dbReference type="CORUM" id="O75695"/>
<dbReference type="DIP" id="DIP-29024N"/>
<dbReference type="ELM" id="O75695"/>
<dbReference type="FunCoup" id="O75695">
    <property type="interactions" value="1417"/>
</dbReference>
<dbReference type="IntAct" id="O75695">
    <property type="interactions" value="74"/>
</dbReference>
<dbReference type="MINT" id="O75695"/>
<dbReference type="STRING" id="9606.ENSP00000218340"/>
<dbReference type="GlyGen" id="O75695">
    <property type="glycosylation" value="1 site, 1 O-linked glycan (1 site)"/>
</dbReference>
<dbReference type="iPTMnet" id="O75695"/>
<dbReference type="PhosphoSitePlus" id="O75695"/>
<dbReference type="SwissPalm" id="O75695"/>
<dbReference type="BioMuta" id="RP2"/>
<dbReference type="jPOST" id="O75695"/>
<dbReference type="MassIVE" id="O75695"/>
<dbReference type="PaxDb" id="9606-ENSP00000218340"/>
<dbReference type="PeptideAtlas" id="O75695"/>
<dbReference type="ProteomicsDB" id="50167"/>
<dbReference type="Pumba" id="O75695"/>
<dbReference type="Antibodypedia" id="373">
    <property type="antibodies" value="164 antibodies from 26 providers"/>
</dbReference>
<dbReference type="DNASU" id="6102"/>
<dbReference type="Ensembl" id="ENST00000218340.4">
    <property type="protein sequence ID" value="ENSP00000218340.3"/>
    <property type="gene ID" value="ENSG00000102218.6"/>
</dbReference>
<dbReference type="GeneID" id="6102"/>
<dbReference type="KEGG" id="hsa:6102"/>
<dbReference type="MANE-Select" id="ENST00000218340.4">
    <property type="protein sequence ID" value="ENSP00000218340.3"/>
    <property type="RefSeq nucleotide sequence ID" value="NM_006915.3"/>
    <property type="RefSeq protein sequence ID" value="NP_008846.2"/>
</dbReference>
<dbReference type="UCSC" id="uc004dgw.5">
    <property type="organism name" value="human"/>
</dbReference>
<dbReference type="AGR" id="HGNC:10274"/>
<dbReference type="CTD" id="6102"/>
<dbReference type="DisGeNET" id="6102"/>
<dbReference type="GeneCards" id="RP2"/>
<dbReference type="GeneReviews" id="RP2"/>
<dbReference type="HGNC" id="HGNC:10274">
    <property type="gene designation" value="RP2"/>
</dbReference>
<dbReference type="HPA" id="ENSG00000102218">
    <property type="expression patterns" value="Tissue enhanced (bone)"/>
</dbReference>
<dbReference type="MalaCards" id="RP2"/>
<dbReference type="MIM" id="300757">
    <property type="type" value="gene"/>
</dbReference>
<dbReference type="MIM" id="312600">
    <property type="type" value="phenotype"/>
</dbReference>
<dbReference type="neXtProt" id="NX_O75695"/>
<dbReference type="OpenTargets" id="ENSG00000102218"/>
<dbReference type="Orphanet" id="791">
    <property type="disease" value="Retinitis pigmentosa"/>
</dbReference>
<dbReference type="PharmGKB" id="PA34641"/>
<dbReference type="VEuPathDB" id="HostDB:ENSG00000102218"/>
<dbReference type="eggNOG" id="KOG2512">
    <property type="taxonomic scope" value="Eukaryota"/>
</dbReference>
<dbReference type="GeneTree" id="ENSGT00940000158262"/>
<dbReference type="HOGENOM" id="CLU_056119_0_0_1"/>
<dbReference type="InParanoid" id="O75695"/>
<dbReference type="OMA" id="KDYMLTG"/>
<dbReference type="OrthoDB" id="194775at2759"/>
<dbReference type="PAN-GO" id="O75695">
    <property type="GO annotations" value="4 GO annotations based on evolutionary models"/>
</dbReference>
<dbReference type="PhylomeDB" id="O75695"/>
<dbReference type="TreeFam" id="TF105832"/>
<dbReference type="PathwayCommons" id="O75695"/>
<dbReference type="Reactome" id="R-HSA-5624138">
    <property type="pathway name" value="Trafficking of myristoylated proteins to the cilium"/>
</dbReference>
<dbReference type="SignaLink" id="O75695"/>
<dbReference type="BioGRID-ORCS" id="6102">
    <property type="hits" value="17 hits in 778 CRISPR screens"/>
</dbReference>
<dbReference type="ChiTaRS" id="RP2">
    <property type="organism name" value="human"/>
</dbReference>
<dbReference type="EvolutionaryTrace" id="O75695"/>
<dbReference type="GeneWiki" id="RP2_(gene)"/>
<dbReference type="GenomeRNAi" id="6102"/>
<dbReference type="Pharos" id="O75695">
    <property type="development level" value="Tbio"/>
</dbReference>
<dbReference type="PRO" id="PR:O75695"/>
<dbReference type="Proteomes" id="UP000005640">
    <property type="component" value="Chromosome X"/>
</dbReference>
<dbReference type="RNAct" id="O75695">
    <property type="molecule type" value="protein"/>
</dbReference>
<dbReference type="Bgee" id="ENSG00000102218">
    <property type="expression patterns" value="Expressed in monocyte and 165 other cell types or tissues"/>
</dbReference>
<dbReference type="ExpressionAtlas" id="O75695">
    <property type="expression patterns" value="baseline and differential"/>
</dbReference>
<dbReference type="GO" id="GO:0005814">
    <property type="term" value="C:centriole"/>
    <property type="evidence" value="ECO:0007669"/>
    <property type="project" value="Ensembl"/>
</dbReference>
<dbReference type="GO" id="GO:0036064">
    <property type="term" value="C:ciliary basal body"/>
    <property type="evidence" value="ECO:0000314"/>
    <property type="project" value="UniProtKB"/>
</dbReference>
<dbReference type="GO" id="GO:0005929">
    <property type="term" value="C:cilium"/>
    <property type="evidence" value="ECO:0000318"/>
    <property type="project" value="GO_Central"/>
</dbReference>
<dbReference type="GO" id="GO:0005737">
    <property type="term" value="C:cytoplasm"/>
    <property type="evidence" value="ECO:0000314"/>
    <property type="project" value="UniProtKB"/>
</dbReference>
<dbReference type="GO" id="GO:0031410">
    <property type="term" value="C:cytoplasmic vesicle"/>
    <property type="evidence" value="ECO:0000316"/>
    <property type="project" value="MGI"/>
</dbReference>
<dbReference type="GO" id="GO:0005829">
    <property type="term" value="C:cytosol"/>
    <property type="evidence" value="ECO:0000314"/>
    <property type="project" value="HPA"/>
</dbReference>
<dbReference type="GO" id="GO:0070062">
    <property type="term" value="C:extracellular exosome"/>
    <property type="evidence" value="ECO:0007005"/>
    <property type="project" value="UniProtKB"/>
</dbReference>
<dbReference type="GO" id="GO:0005794">
    <property type="term" value="C:Golgi apparatus"/>
    <property type="evidence" value="ECO:0007669"/>
    <property type="project" value="Ensembl"/>
</dbReference>
<dbReference type="GO" id="GO:0043231">
    <property type="term" value="C:intracellular membrane-bounded organelle"/>
    <property type="evidence" value="ECO:0000314"/>
    <property type="project" value="HPA"/>
</dbReference>
<dbReference type="GO" id="GO:0016604">
    <property type="term" value="C:nuclear body"/>
    <property type="evidence" value="ECO:0000314"/>
    <property type="project" value="HPA"/>
</dbReference>
<dbReference type="GO" id="GO:0005654">
    <property type="term" value="C:nucleoplasm"/>
    <property type="evidence" value="ECO:0000314"/>
    <property type="project" value="HPA"/>
</dbReference>
<dbReference type="GO" id="GO:1990075">
    <property type="term" value="C:periciliary membrane compartment"/>
    <property type="evidence" value="ECO:0000318"/>
    <property type="project" value="GO_Central"/>
</dbReference>
<dbReference type="GO" id="GO:0005886">
    <property type="term" value="C:plasma membrane"/>
    <property type="evidence" value="ECO:0000314"/>
    <property type="project" value="UniProtKB"/>
</dbReference>
<dbReference type="GO" id="GO:0005525">
    <property type="term" value="F:GTP binding"/>
    <property type="evidence" value="ECO:0007669"/>
    <property type="project" value="UniProtKB-KW"/>
</dbReference>
<dbReference type="GO" id="GO:0005096">
    <property type="term" value="F:GTPase activator activity"/>
    <property type="evidence" value="ECO:0000314"/>
    <property type="project" value="UniProtKB"/>
</dbReference>
<dbReference type="GO" id="GO:0000287">
    <property type="term" value="F:magnesium ion binding"/>
    <property type="evidence" value="ECO:0000314"/>
    <property type="project" value="UniProtKB"/>
</dbReference>
<dbReference type="GO" id="GO:0051082">
    <property type="term" value="F:unfolded protein binding"/>
    <property type="evidence" value="ECO:0000304"/>
    <property type="project" value="ProtInc"/>
</dbReference>
<dbReference type="GO" id="GO:0060271">
    <property type="term" value="P:cilium assembly"/>
    <property type="evidence" value="ECO:0000304"/>
    <property type="project" value="Reactome"/>
</dbReference>
<dbReference type="GO" id="GO:0006892">
    <property type="term" value="P:post-Golgi vesicle-mediated transport"/>
    <property type="evidence" value="ECO:0000315"/>
    <property type="project" value="MGI"/>
</dbReference>
<dbReference type="GO" id="GO:0006457">
    <property type="term" value="P:protein folding"/>
    <property type="evidence" value="ECO:0000304"/>
    <property type="project" value="UniProtKB"/>
</dbReference>
<dbReference type="GO" id="GO:0015031">
    <property type="term" value="P:protein transport"/>
    <property type="evidence" value="ECO:0007669"/>
    <property type="project" value="UniProtKB-KW"/>
</dbReference>
<dbReference type="GO" id="GO:0007601">
    <property type="term" value="P:visual perception"/>
    <property type="evidence" value="ECO:0000304"/>
    <property type="project" value="ProtInc"/>
</dbReference>
<dbReference type="FunFam" id="2.160.20.70:FF:000004">
    <property type="entry name" value="Protein XRP2"/>
    <property type="match status" value="1"/>
</dbReference>
<dbReference type="FunFam" id="3.30.70.141:FF:000007">
    <property type="entry name" value="Protein XRP2"/>
    <property type="match status" value="1"/>
</dbReference>
<dbReference type="Gene3D" id="2.160.20.70">
    <property type="match status" value="1"/>
</dbReference>
<dbReference type="Gene3D" id="3.30.70.141">
    <property type="entry name" value="Nucleoside diphosphate kinase-like domain"/>
    <property type="match status" value="1"/>
</dbReference>
<dbReference type="InterPro" id="IPR017901">
    <property type="entry name" value="C-CAP_CF_C-like"/>
</dbReference>
<dbReference type="InterPro" id="IPR016098">
    <property type="entry name" value="CAP/MinC_C"/>
</dbReference>
<dbReference type="InterPro" id="IPR036223">
    <property type="entry name" value="CAP_C_sf"/>
</dbReference>
<dbReference type="InterPro" id="IPR006599">
    <property type="entry name" value="CARP_motif"/>
</dbReference>
<dbReference type="InterPro" id="IPR036850">
    <property type="entry name" value="NDK-like_dom_sf"/>
</dbReference>
<dbReference type="InterPro" id="IPR012945">
    <property type="entry name" value="Tubulin-bd_cofactor_C_dom"/>
</dbReference>
<dbReference type="InterPro" id="IPR039093">
    <property type="entry name" value="XRP2"/>
</dbReference>
<dbReference type="PANTHER" id="PTHR15440:SF0">
    <property type="entry name" value="PROTEIN XRP2"/>
    <property type="match status" value="1"/>
</dbReference>
<dbReference type="PANTHER" id="PTHR15440">
    <property type="entry name" value="XRP2 PROTEIN"/>
    <property type="match status" value="1"/>
</dbReference>
<dbReference type="Pfam" id="PF07986">
    <property type="entry name" value="TBCC"/>
    <property type="match status" value="1"/>
</dbReference>
<dbReference type="PIRSF" id="PIRSF037947">
    <property type="entry name" value="Protein_XRP2"/>
    <property type="match status" value="1"/>
</dbReference>
<dbReference type="SMART" id="SM00673">
    <property type="entry name" value="CARP"/>
    <property type="match status" value="2"/>
</dbReference>
<dbReference type="SUPFAM" id="SSF69340">
    <property type="entry name" value="C-terminal domain of adenylylcyclase associated protein"/>
    <property type="match status" value="1"/>
</dbReference>
<dbReference type="SUPFAM" id="SSF54919">
    <property type="entry name" value="Nucleoside diphosphate kinase, NDK"/>
    <property type="match status" value="1"/>
</dbReference>
<dbReference type="PROSITE" id="PS51329">
    <property type="entry name" value="C_CAP_COFACTOR_C"/>
    <property type="match status" value="1"/>
</dbReference>
<dbReference type="PROSITE" id="PS51374">
    <property type="entry name" value="NDPK_LIKE"/>
    <property type="match status" value="1"/>
</dbReference>
<feature type="initiator methionine" description="Removed" evidence="22">
    <location>
        <position position="1"/>
    </location>
</feature>
<feature type="chain" id="PRO_0000080047" description="Protein XRP2">
    <location>
        <begin position="2"/>
        <end position="350"/>
    </location>
</feature>
<feature type="domain" description="C-CAP/cofactor C-like" evidence="1">
    <location>
        <begin position="24"/>
        <end position="179"/>
    </location>
</feature>
<feature type="region of interest" description="Disordered" evidence="2">
    <location>
        <begin position="1"/>
        <end position="31"/>
    </location>
</feature>
<feature type="compositionally biased region" description="Basic residues" evidence="2">
    <location>
        <begin position="1"/>
        <end position="10"/>
    </location>
</feature>
<feature type="compositionally biased region" description="Basic and acidic residues" evidence="2">
    <location>
        <begin position="11"/>
        <end position="31"/>
    </location>
</feature>
<feature type="binding site">
    <location>
        <begin position="98"/>
        <end position="99"/>
    </location>
    <ligand>
        <name>GTP</name>
        <dbReference type="ChEBI" id="CHEBI:37565"/>
    </ligand>
</feature>
<feature type="binding site">
    <location>
        <begin position="115"/>
        <end position="118"/>
    </location>
    <ligand>
        <name>GTP</name>
        <dbReference type="ChEBI" id="CHEBI:37565"/>
    </ligand>
</feature>
<feature type="lipid moiety-binding region" description="N-myristoyl glycine" evidence="26">
    <location>
        <position position="2"/>
    </location>
</feature>
<feature type="lipid moiety-binding region" description="S-palmitoyl cysteine" evidence="22 26">
    <location>
        <position position="3"/>
    </location>
</feature>
<feature type="sequence variant" id="VAR_008497" description="In RP2; loss of membrane association; enhances interaction with ARL3; dbSNP:rs137852284." evidence="5 9 11 24">
    <location>
        <position position="6"/>
    </location>
</feature>
<feature type="sequence variant" id="VAR_018069" description="In RP2; dbSNP:rs2147081192." evidence="12">
    <original>C</original>
    <variation>Y</variation>
    <location>
        <position position="67"/>
    </location>
</feature>
<feature type="sequence variant" id="VAR_018070" description="In RP2; dbSNP:rs2147081236." evidence="8 15">
    <original>C</original>
    <variation>Y</variation>
    <location>
        <position position="86"/>
    </location>
</feature>
<feature type="sequence variant" id="VAR_018071" description="In RP2; uncertain significance; dbSNP:rs2147081255." evidence="8 15">
    <original>P</original>
    <variation>L</variation>
    <location>
        <position position="95"/>
    </location>
</feature>
<feature type="sequence variant" id="VAR_008498" description="In RP2." evidence="3">
    <original>C</original>
    <variation>G</variation>
    <location>
        <position position="108"/>
    </location>
</feature>
<feature type="sequence variant" id="VAR_068353" description="In RP2." evidence="21">
    <original>C</original>
    <variation>Y</variation>
    <location>
        <position position="108"/>
    </location>
</feature>
<feature type="sequence variant" id="VAR_026058" description="In RP2; dbSNP:rs1556318633." evidence="14">
    <original>R</original>
    <variation>C</variation>
    <location>
        <position position="118"/>
    </location>
</feature>
<feature type="sequence variant" id="VAR_008499" description="In RP2; reduces affinity for ARL3 800-fold; loss of stimulation of tubulin GTPase activity; no effect on subcellular location; dbSNP:rs28933687." evidence="4 5 8 9 11 12 14 15 16 24">
    <original>R</original>
    <variation>H</variation>
    <location>
        <position position="118"/>
    </location>
</feature>
<feature type="sequence variant" id="VAR_018072" description="In RP2; dbSNP:rs28933687." evidence="10 17">
    <original>R</original>
    <variation>L</variation>
    <location>
        <position position="118"/>
    </location>
</feature>
<feature type="sequence variant" id="VAR_018073" description="In RP2; dbSNP:rs1924904597." evidence="8 12 15">
    <location>
        <position position="137"/>
    </location>
</feature>
<feature type="sequence variant" id="VAR_018074" description="In RP2; reduces affinity for ARL3 150-fold and inhibits the GTP-hydrolysis rate of ARL3." evidence="10 16 17">
    <original>E</original>
    <variation>G</variation>
    <location>
        <position position="138"/>
    </location>
</feature>
<feature type="sequence variant" id="VAR_053961" description="In dbSNP:rs3126141.">
    <original>K</original>
    <variation>R</variation>
    <location>
        <position position="144"/>
    </location>
</feature>
<feature type="sequence variant" id="VAR_018075" description="In RP2." evidence="12">
    <original>L</original>
    <variation>P</variation>
    <location>
        <position position="188"/>
    </location>
</feature>
<feature type="sequence variant" id="VAR_008500" description="In RP2; dbSNP:rs2147081596." evidence="6">
    <original>L</original>
    <variation>R</variation>
    <location>
        <position position="253"/>
    </location>
</feature>
<feature type="sequence variant" id="VAR_014535" description="Reduces affinity for ARL3 3-fold; dbSNP:rs1805147." evidence="7 8 10 12 15 16 23">
    <original>R</original>
    <variation>W</variation>
    <location>
        <position position="282"/>
    </location>
</feature>
<feature type="sequence variant" id="VAR_014536" description="In dbSNP:rs1805148." evidence="7">
    <original>D</original>
    <variation>Y</variation>
    <location>
        <position position="338"/>
    </location>
</feature>
<feature type="mutagenesis site" description="Loss of membrane association." evidence="9">
    <original>G</original>
    <variation>A</variation>
    <location>
        <position position="2"/>
    </location>
</feature>
<feature type="mutagenesis site" description="Targeting to internal membranes. Loss of targeting to the plasma membrane." evidence="9">
    <original>C</original>
    <variation>S</variation>
    <location>
        <position position="3"/>
    </location>
</feature>
<feature type="mutagenesis site" description="Reduces affinity for mouse ARL3; when associated with A-29." evidence="17">
    <original>S</original>
    <variation>A</variation>
    <location>
        <position position="28"/>
    </location>
</feature>
<feature type="mutagenesis site" description="Reduces affinity for mouse ARL3; when associated with A-28." evidence="17">
    <original>W</original>
    <variation>A</variation>
    <location>
        <position position="29"/>
    </location>
</feature>
<feature type="mutagenesis site" description="Does not reduce affinity for mouse ARL3; when associated with A-32." evidence="17">
    <original>Q</original>
    <variation>A</variation>
    <location>
        <position position="31"/>
    </location>
</feature>
<feature type="mutagenesis site" description="Does not reduce affinity for mouse ARL3; when associated with A-31." evidence="17">
    <original>R</original>
    <variation>A</variation>
    <location>
        <position position="32"/>
    </location>
</feature>
<feature type="mutagenesis site" description="Reduces affinity for mouse ARL3." evidence="17">
    <original>F</original>
    <variation>A</variation>
    <location>
        <position position="101"/>
    </location>
</feature>
<feature type="mutagenesis site" description="Reduces affinity for mouse ARL3." evidence="17">
    <original>Q</original>
    <variation>A</variation>
    <location>
        <position position="115"/>
    </location>
</feature>
<feature type="mutagenesis site" description="Reduces affinity and GTP-hydrolysis rate for mouse ARL3." evidence="17">
    <original>Q</original>
    <variation>A</variation>
    <location>
        <position position="116"/>
    </location>
</feature>
<feature type="mutagenesis site" description="Reduces affinity and GTP-hydrolysis rate for mouse ARL3." evidence="17">
    <original>R</original>
    <variation>A</variation>
    <location>
        <position position="118"/>
    </location>
</feature>
<feature type="mutagenesis site" description="Reduces affinity for mouse ARL3; when associated with S-121." evidence="17">
    <original>R</original>
    <variation>H</variation>
    <location>
        <position position="120"/>
    </location>
</feature>
<feature type="mutagenesis site" description="Reduces affinity for mouse ARL3; when associated with H-120.">
    <original>D</original>
    <variation>S</variation>
    <location>
        <position position="121"/>
    </location>
</feature>
<feature type="mutagenesis site" description="Reduces affinity and GTP-hydrolysis rate for mouse ARL3." evidence="17">
    <original>F</original>
    <variation>A</variation>
    <location>
        <position position="177"/>
    </location>
</feature>
<feature type="sequence conflict" description="In Ref. 1; CAA07577." evidence="25" ref="1">
    <original>N</original>
    <variation>D</variation>
    <location>
        <position position="168"/>
    </location>
</feature>
<feature type="strand" evidence="27">
    <location>
        <begin position="39"/>
        <end position="44"/>
    </location>
</feature>
<feature type="strand" evidence="27">
    <location>
        <begin position="49"/>
        <end position="52"/>
    </location>
</feature>
<feature type="strand" evidence="27">
    <location>
        <begin position="62"/>
        <end position="66"/>
    </location>
</feature>
<feature type="strand" evidence="27">
    <location>
        <begin position="71"/>
        <end position="74"/>
    </location>
</feature>
<feature type="strand" evidence="27">
    <location>
        <begin position="81"/>
        <end position="85"/>
    </location>
</feature>
<feature type="strand" evidence="27">
    <location>
        <begin position="90"/>
        <end position="104"/>
    </location>
</feature>
<feature type="strand" evidence="27">
    <location>
        <begin position="106"/>
        <end position="121"/>
    </location>
</feature>
<feature type="strand" evidence="27">
    <location>
        <begin position="123"/>
        <end position="133"/>
    </location>
</feature>
<feature type="strand" evidence="27">
    <location>
        <begin position="136"/>
        <end position="139"/>
    </location>
</feature>
<feature type="strand" evidence="27">
    <location>
        <begin position="141"/>
        <end position="147"/>
    </location>
</feature>
<feature type="helix" evidence="27">
    <location>
        <begin position="155"/>
        <end position="161"/>
    </location>
</feature>
<feature type="strand" evidence="27">
    <location>
        <begin position="175"/>
        <end position="178"/>
    </location>
</feature>
<feature type="strand" evidence="27">
    <location>
        <begin position="185"/>
        <end position="188"/>
    </location>
</feature>
<feature type="helix" evidence="27">
    <location>
        <begin position="195"/>
        <end position="197"/>
    </location>
</feature>
<feature type="helix" evidence="27">
    <location>
        <begin position="205"/>
        <end position="207"/>
    </location>
</feature>
<feature type="turn" evidence="27">
    <location>
        <begin position="216"/>
        <end position="218"/>
    </location>
</feature>
<feature type="strand" evidence="27">
    <location>
        <begin position="235"/>
        <end position="240"/>
    </location>
</feature>
<feature type="helix" evidence="27">
    <location>
        <begin position="246"/>
        <end position="259"/>
    </location>
</feature>
<feature type="strand" evidence="27">
    <location>
        <begin position="263"/>
        <end position="270"/>
    </location>
</feature>
<feature type="helix" evidence="27">
    <location>
        <begin position="274"/>
        <end position="281"/>
    </location>
</feature>
<feature type="helix" evidence="27">
    <location>
        <begin position="282"/>
        <end position="287"/>
    </location>
</feature>
<feature type="helix" evidence="27">
    <location>
        <begin position="289"/>
        <end position="294"/>
    </location>
</feature>
<feature type="strand" evidence="27">
    <location>
        <begin position="297"/>
        <end position="304"/>
    </location>
</feature>
<feature type="helix" evidence="27">
    <location>
        <begin position="307"/>
        <end position="318"/>
    </location>
</feature>
<feature type="strand" evidence="27">
    <location>
        <begin position="324"/>
        <end position="326"/>
    </location>
</feature>
<feature type="helix" evidence="27">
    <location>
        <begin position="330"/>
        <end position="348"/>
    </location>
</feature>